<reference key="1">
    <citation type="journal article" date="2004" name="Nucleic Acids Res.">
        <title>Thermoadaptation trait revealed by the genome sequence of thermophilic Geobacillus kaustophilus.</title>
        <authorList>
            <person name="Takami H."/>
            <person name="Takaki Y."/>
            <person name="Chee G.-J."/>
            <person name="Nishi S."/>
            <person name="Shimamura S."/>
            <person name="Suzuki H."/>
            <person name="Matsui S."/>
            <person name="Uchiyama I."/>
        </authorList>
    </citation>
    <scope>NUCLEOTIDE SEQUENCE [LARGE SCALE GENOMIC DNA]</scope>
    <source>
        <strain>HTA426</strain>
    </source>
</reference>
<sequence length="57" mass="6645">MAVPFRRTSKTRKRLRRTHFKLQVPGMVQCPNCGEWKLAHRVCKACGTYKGRDVVNK</sequence>
<dbReference type="EMBL" id="BA000043">
    <property type="protein sequence ID" value="BAD75390.1"/>
    <property type="molecule type" value="Genomic_DNA"/>
</dbReference>
<dbReference type="RefSeq" id="WP_011230605.1">
    <property type="nucleotide sequence ID" value="NC_006510.1"/>
</dbReference>
<dbReference type="SMR" id="Q5L0Z0"/>
<dbReference type="STRING" id="235909.GK1105"/>
<dbReference type="GeneID" id="89611677"/>
<dbReference type="KEGG" id="gka:GK1105"/>
<dbReference type="eggNOG" id="COG0333">
    <property type="taxonomic scope" value="Bacteria"/>
</dbReference>
<dbReference type="HOGENOM" id="CLU_129084_1_3_9"/>
<dbReference type="Proteomes" id="UP000001172">
    <property type="component" value="Chromosome"/>
</dbReference>
<dbReference type="GO" id="GO:0015934">
    <property type="term" value="C:large ribosomal subunit"/>
    <property type="evidence" value="ECO:0007669"/>
    <property type="project" value="InterPro"/>
</dbReference>
<dbReference type="GO" id="GO:0003735">
    <property type="term" value="F:structural constituent of ribosome"/>
    <property type="evidence" value="ECO:0007669"/>
    <property type="project" value="InterPro"/>
</dbReference>
<dbReference type="GO" id="GO:0006412">
    <property type="term" value="P:translation"/>
    <property type="evidence" value="ECO:0007669"/>
    <property type="project" value="UniProtKB-UniRule"/>
</dbReference>
<dbReference type="HAMAP" id="MF_00340">
    <property type="entry name" value="Ribosomal_bL32"/>
    <property type="match status" value="1"/>
</dbReference>
<dbReference type="InterPro" id="IPR002677">
    <property type="entry name" value="Ribosomal_bL32"/>
</dbReference>
<dbReference type="InterPro" id="IPR044957">
    <property type="entry name" value="Ribosomal_bL32_bact"/>
</dbReference>
<dbReference type="InterPro" id="IPR011332">
    <property type="entry name" value="Ribosomal_zn-bd"/>
</dbReference>
<dbReference type="NCBIfam" id="TIGR01031">
    <property type="entry name" value="rpmF_bact"/>
    <property type="match status" value="1"/>
</dbReference>
<dbReference type="PANTHER" id="PTHR35534">
    <property type="entry name" value="50S RIBOSOMAL PROTEIN L32"/>
    <property type="match status" value="1"/>
</dbReference>
<dbReference type="PANTHER" id="PTHR35534:SF2">
    <property type="entry name" value="LARGE RIBOSOMAL SUBUNIT PROTEIN BL32"/>
    <property type="match status" value="1"/>
</dbReference>
<dbReference type="Pfam" id="PF01783">
    <property type="entry name" value="Ribosomal_L32p"/>
    <property type="match status" value="1"/>
</dbReference>
<dbReference type="SUPFAM" id="SSF57829">
    <property type="entry name" value="Zn-binding ribosomal proteins"/>
    <property type="match status" value="1"/>
</dbReference>
<accession>Q5L0Z0</accession>
<gene>
    <name evidence="1" type="primary">rpmF</name>
    <name type="ordered locus">GK1105</name>
</gene>
<organism>
    <name type="scientific">Geobacillus kaustophilus (strain HTA426)</name>
    <dbReference type="NCBI Taxonomy" id="235909"/>
    <lineage>
        <taxon>Bacteria</taxon>
        <taxon>Bacillati</taxon>
        <taxon>Bacillota</taxon>
        <taxon>Bacilli</taxon>
        <taxon>Bacillales</taxon>
        <taxon>Anoxybacillaceae</taxon>
        <taxon>Geobacillus</taxon>
        <taxon>Geobacillus thermoleovorans group</taxon>
    </lineage>
</organism>
<evidence type="ECO:0000255" key="1">
    <source>
        <dbReference type="HAMAP-Rule" id="MF_00340"/>
    </source>
</evidence>
<evidence type="ECO:0000305" key="2"/>
<proteinExistence type="inferred from homology"/>
<protein>
    <recommendedName>
        <fullName evidence="1">Large ribosomal subunit protein bL32</fullName>
    </recommendedName>
    <alternativeName>
        <fullName evidence="2">50S ribosomal protein L32</fullName>
    </alternativeName>
</protein>
<name>RL32_GEOKA</name>
<comment type="similarity">
    <text evidence="1">Belongs to the bacterial ribosomal protein bL32 family.</text>
</comment>
<feature type="chain" id="PRO_0000225726" description="Large ribosomal subunit protein bL32">
    <location>
        <begin position="1"/>
        <end position="57"/>
    </location>
</feature>
<keyword id="KW-1185">Reference proteome</keyword>
<keyword id="KW-0687">Ribonucleoprotein</keyword>
<keyword id="KW-0689">Ribosomal protein</keyword>